<proteinExistence type="evidence at transcript level"/>
<dbReference type="EC" id="3.13.2.1"/>
<dbReference type="EMBL" id="U57795">
    <property type="protein sequence ID" value="AAC98514.1"/>
    <property type="molecule type" value="mRNA"/>
</dbReference>
<dbReference type="SMR" id="Q12663"/>
<dbReference type="VEuPathDB" id="FungiDB:T552_03419"/>
<dbReference type="UniPathway" id="UPA00314">
    <property type="reaction ID" value="UER00076"/>
</dbReference>
<dbReference type="GO" id="GO:0005829">
    <property type="term" value="C:cytosol"/>
    <property type="evidence" value="ECO:0007669"/>
    <property type="project" value="TreeGrafter"/>
</dbReference>
<dbReference type="GO" id="GO:0004013">
    <property type="term" value="F:adenosylhomocysteinase activity"/>
    <property type="evidence" value="ECO:0007669"/>
    <property type="project" value="RHEA"/>
</dbReference>
<dbReference type="GO" id="GO:0006730">
    <property type="term" value="P:one-carbon metabolic process"/>
    <property type="evidence" value="ECO:0007669"/>
    <property type="project" value="UniProtKB-KW"/>
</dbReference>
<dbReference type="GO" id="GO:0033353">
    <property type="term" value="P:S-adenosylmethionine cycle"/>
    <property type="evidence" value="ECO:0007669"/>
    <property type="project" value="TreeGrafter"/>
</dbReference>
<dbReference type="CDD" id="cd00401">
    <property type="entry name" value="SAHH"/>
    <property type="match status" value="1"/>
</dbReference>
<dbReference type="FunFam" id="3.40.50.720:FF:000004">
    <property type="entry name" value="Adenosylhomocysteinase"/>
    <property type="match status" value="1"/>
</dbReference>
<dbReference type="Gene3D" id="3.40.50.1480">
    <property type="entry name" value="Adenosylhomocysteinase-like"/>
    <property type="match status" value="2"/>
</dbReference>
<dbReference type="Gene3D" id="3.40.50.720">
    <property type="entry name" value="NAD(P)-binding Rossmann-like Domain"/>
    <property type="match status" value="1"/>
</dbReference>
<dbReference type="InterPro" id="IPR042172">
    <property type="entry name" value="Adenosylhomocyst_ase-like_sf"/>
</dbReference>
<dbReference type="InterPro" id="IPR000043">
    <property type="entry name" value="Adenosylhomocysteinase-like"/>
</dbReference>
<dbReference type="InterPro" id="IPR015878">
    <property type="entry name" value="Ado_hCys_hydrolase_NAD-bd"/>
</dbReference>
<dbReference type="InterPro" id="IPR036291">
    <property type="entry name" value="NAD(P)-bd_dom_sf"/>
</dbReference>
<dbReference type="InterPro" id="IPR020082">
    <property type="entry name" value="S-Ado-L-homoCys_hydrolase_CS"/>
</dbReference>
<dbReference type="NCBIfam" id="TIGR00936">
    <property type="entry name" value="ahcY"/>
    <property type="match status" value="1"/>
</dbReference>
<dbReference type="NCBIfam" id="NF004005">
    <property type="entry name" value="PRK05476.2-3"/>
    <property type="match status" value="1"/>
</dbReference>
<dbReference type="PANTHER" id="PTHR23420">
    <property type="entry name" value="ADENOSYLHOMOCYSTEINASE"/>
    <property type="match status" value="1"/>
</dbReference>
<dbReference type="PANTHER" id="PTHR23420:SF0">
    <property type="entry name" value="ADENOSYLHOMOCYSTEINASE"/>
    <property type="match status" value="1"/>
</dbReference>
<dbReference type="Pfam" id="PF05221">
    <property type="entry name" value="AdoHcyase"/>
    <property type="match status" value="1"/>
</dbReference>
<dbReference type="Pfam" id="PF00670">
    <property type="entry name" value="AdoHcyase_NAD"/>
    <property type="match status" value="1"/>
</dbReference>
<dbReference type="PIRSF" id="PIRSF001109">
    <property type="entry name" value="Ad_hcy_hydrolase"/>
    <property type="match status" value="1"/>
</dbReference>
<dbReference type="SMART" id="SM00996">
    <property type="entry name" value="AdoHcyase"/>
    <property type="match status" value="1"/>
</dbReference>
<dbReference type="SMART" id="SM00997">
    <property type="entry name" value="AdoHcyase_NAD"/>
    <property type="match status" value="1"/>
</dbReference>
<dbReference type="SUPFAM" id="SSF52283">
    <property type="entry name" value="Formate/glycerate dehydrogenase catalytic domain-like"/>
    <property type="match status" value="1"/>
</dbReference>
<dbReference type="SUPFAM" id="SSF51735">
    <property type="entry name" value="NAD(P)-binding Rossmann-fold domains"/>
    <property type="match status" value="1"/>
</dbReference>
<dbReference type="PROSITE" id="PS00738">
    <property type="entry name" value="ADOHCYASE_1"/>
    <property type="match status" value="1"/>
</dbReference>
<dbReference type="PROSITE" id="PS00739">
    <property type="entry name" value="ADOHCYASE_2"/>
    <property type="match status" value="1"/>
</dbReference>
<evidence type="ECO:0000250" key="1"/>
<evidence type="ECO:0000305" key="2"/>
<organism>
    <name type="scientific">Pneumocystis carinii</name>
    <dbReference type="NCBI Taxonomy" id="4754"/>
    <lineage>
        <taxon>Eukaryota</taxon>
        <taxon>Fungi</taxon>
        <taxon>Dikarya</taxon>
        <taxon>Ascomycota</taxon>
        <taxon>Taphrinomycotina</taxon>
        <taxon>Pneumocystomycetes</taxon>
        <taxon>Pneumocystaceae</taxon>
        <taxon>Pneumocystis</taxon>
    </lineage>
</organism>
<keyword id="KW-0378">Hydrolase</keyword>
<keyword id="KW-0520">NAD</keyword>
<keyword id="KW-0554">One-carbon metabolism</keyword>
<name>SAHH_PNECA</name>
<protein>
    <recommendedName>
        <fullName>Adenosylhomocysteinase</fullName>
        <shortName>AdoHcyase</shortName>
        <ecNumber>3.13.2.1</ecNumber>
    </recommendedName>
    <alternativeName>
        <fullName>S-adenosyl-L-homocysteine hydrolase</fullName>
    </alternativeName>
</protein>
<reference key="1">
    <citation type="journal article" date="1996" name="J. Eukaryot. Microbiol.">
        <title>Cloning of the S-adenosylhomocysteine hydrolase gene of Pneumocystis carinii.</title>
        <authorList>
            <person name="Lasbury M.E."/>
            <person name="Brady S."/>
            <person name="McLaughlin G."/>
            <person name="Bartlett M.S."/>
            <person name="Smith J.W."/>
            <person name="Lee C.H."/>
        </authorList>
    </citation>
    <scope>NUCLEOTIDE SEQUENCE [MRNA]</scope>
    <source>
        <strain>Rattus</strain>
    </source>
</reference>
<accession>Q12663</accession>
<comment type="function">
    <text>Adenosylhomocysteine is a competitive inhibitor of S-adenosyl-L-methionine-dependent methyl transferase reactions; therefore adenosylhomocysteinase may play a key role in the control of methylations via regulation of the intracellular concentration of adenosylhomocysteine.</text>
</comment>
<comment type="catalytic activity">
    <reaction>
        <text>S-adenosyl-L-homocysteine + H2O = L-homocysteine + adenosine</text>
        <dbReference type="Rhea" id="RHEA:21708"/>
        <dbReference type="ChEBI" id="CHEBI:15377"/>
        <dbReference type="ChEBI" id="CHEBI:16335"/>
        <dbReference type="ChEBI" id="CHEBI:57856"/>
        <dbReference type="ChEBI" id="CHEBI:58199"/>
        <dbReference type="EC" id="3.13.2.1"/>
    </reaction>
</comment>
<comment type="cofactor">
    <cofactor evidence="1">
        <name>NAD(+)</name>
        <dbReference type="ChEBI" id="CHEBI:57540"/>
    </cofactor>
    <text evidence="1">Binds 1 NAD(+) per subunit.</text>
</comment>
<comment type="pathway">
    <text>Amino-acid biosynthesis; L-homocysteine biosynthesis; L-homocysteine from S-adenosyl-L-homocysteine: step 1/1.</text>
</comment>
<comment type="similarity">
    <text evidence="2">Belongs to the adenosylhomocysteinase family.</text>
</comment>
<gene>
    <name type="primary">SAHH</name>
</gene>
<feature type="chain" id="PRO_0000116935" description="Adenosylhomocysteinase">
    <location>
        <begin position="1" status="less than"/>
        <end position="440"/>
    </location>
</feature>
<feature type="binding site" evidence="1">
    <location>
        <position position="47"/>
    </location>
    <ligand>
        <name>substrate</name>
    </ligand>
</feature>
<feature type="binding site" evidence="1">
    <location>
        <position position="123"/>
    </location>
    <ligand>
        <name>substrate</name>
    </ligand>
</feature>
<feature type="binding site" evidence="1">
    <location>
        <position position="148"/>
    </location>
    <ligand>
        <name>substrate</name>
    </ligand>
</feature>
<feature type="binding site" evidence="1">
    <location>
        <begin position="149"/>
        <end position="151"/>
    </location>
    <ligand>
        <name>NAD(+)</name>
        <dbReference type="ChEBI" id="CHEBI:57540"/>
    </ligand>
</feature>
<feature type="binding site" evidence="1">
    <location>
        <position position="178"/>
    </location>
    <ligand>
        <name>substrate</name>
    </ligand>
</feature>
<feature type="binding site" evidence="1">
    <location>
        <position position="182"/>
    </location>
    <ligand>
        <name>substrate</name>
    </ligand>
</feature>
<feature type="binding site" evidence="1">
    <location>
        <position position="183"/>
    </location>
    <ligand>
        <name>NAD(+)</name>
        <dbReference type="ChEBI" id="CHEBI:57540"/>
    </ligand>
</feature>
<feature type="binding site" evidence="1">
    <location>
        <begin position="228"/>
        <end position="233"/>
    </location>
    <ligand>
        <name>NAD(+)</name>
        <dbReference type="ChEBI" id="CHEBI:57540"/>
    </ligand>
</feature>
<feature type="binding site" evidence="1">
    <location>
        <position position="251"/>
    </location>
    <ligand>
        <name>NAD(+)</name>
        <dbReference type="ChEBI" id="CHEBI:57540"/>
    </ligand>
</feature>
<feature type="binding site" evidence="1">
    <location>
        <begin position="307"/>
        <end position="309"/>
    </location>
    <ligand>
        <name>NAD(+)</name>
        <dbReference type="ChEBI" id="CHEBI:57540"/>
    </ligand>
</feature>
<feature type="binding site" evidence="1">
    <location>
        <position position="354"/>
    </location>
    <ligand>
        <name>NAD(+)</name>
        <dbReference type="ChEBI" id="CHEBI:57540"/>
    </ligand>
</feature>
<feature type="non-terminal residue">
    <location>
        <position position="1"/>
    </location>
</feature>
<sequence>SCRYFLAEWGRKEIELAENEMPGLISCRRNMRFKPLRVQIAGCLHMTIQTAVLIETLVELGAEVTWSSCNIFSTQDHAAAAIAASGISVFAWKGETEEEYLWCIETQLTSFKDGKHLNMILDDGGDVTSLVHNKYPDYLKNCKGISEETTTGVHQFYKMLKEGKLKVPAINVNDSVTKSKFDNLYGVSLVLIYKIISNIKLRCRESLIDGIKRATDIMIAAKVAIVAGFGDVGKGCAKALRGMGARVIITEIDPIVALQASMEGYQVAVMEEVADQADIFVTATGCKDIICERHFEAMKNDAIICNIGHFDVEIDVAWLIKKCSSISNIKPQVDRYLLGNGRNIILLAEGRLVNLGCATGHSSMVMSMSFTNQVLAQIALWTAQEGQYPLGVHFLPKKLDEEVARLHLSKLGKLTSLTPEQSAYLDIPIDGPYKSEHYRY</sequence>